<accession>Q7VM27</accession>
<dbReference type="EC" id="1.1.1.267" evidence="1"/>
<dbReference type="EMBL" id="AE017143">
    <property type="protein sequence ID" value="AAP96036.1"/>
    <property type="molecule type" value="Genomic_DNA"/>
</dbReference>
<dbReference type="RefSeq" id="WP_010945085.1">
    <property type="nucleotide sequence ID" value="NC_002940.2"/>
</dbReference>
<dbReference type="SMR" id="Q7VM27"/>
<dbReference type="STRING" id="233412.HD_1186"/>
<dbReference type="KEGG" id="hdu:HD_1186"/>
<dbReference type="eggNOG" id="COG0743">
    <property type="taxonomic scope" value="Bacteria"/>
</dbReference>
<dbReference type="HOGENOM" id="CLU_035714_4_0_6"/>
<dbReference type="OrthoDB" id="9806546at2"/>
<dbReference type="UniPathway" id="UPA00056">
    <property type="reaction ID" value="UER00092"/>
</dbReference>
<dbReference type="Proteomes" id="UP000001022">
    <property type="component" value="Chromosome"/>
</dbReference>
<dbReference type="GO" id="GO:0030604">
    <property type="term" value="F:1-deoxy-D-xylulose-5-phosphate reductoisomerase activity"/>
    <property type="evidence" value="ECO:0007669"/>
    <property type="project" value="UniProtKB-UniRule"/>
</dbReference>
<dbReference type="GO" id="GO:0030145">
    <property type="term" value="F:manganese ion binding"/>
    <property type="evidence" value="ECO:0007669"/>
    <property type="project" value="TreeGrafter"/>
</dbReference>
<dbReference type="GO" id="GO:0070402">
    <property type="term" value="F:NADPH binding"/>
    <property type="evidence" value="ECO:0007669"/>
    <property type="project" value="InterPro"/>
</dbReference>
<dbReference type="GO" id="GO:0051484">
    <property type="term" value="P:isopentenyl diphosphate biosynthetic process, methylerythritol 4-phosphate pathway involved in terpenoid biosynthetic process"/>
    <property type="evidence" value="ECO:0007669"/>
    <property type="project" value="TreeGrafter"/>
</dbReference>
<dbReference type="FunFam" id="1.10.1740.10:FF:000004">
    <property type="entry name" value="1-deoxy-D-xylulose 5-phosphate reductoisomerase"/>
    <property type="match status" value="1"/>
</dbReference>
<dbReference type="FunFam" id="3.40.50.720:FF:000045">
    <property type="entry name" value="1-deoxy-D-xylulose 5-phosphate reductoisomerase"/>
    <property type="match status" value="1"/>
</dbReference>
<dbReference type="Gene3D" id="1.10.1740.10">
    <property type="match status" value="1"/>
</dbReference>
<dbReference type="Gene3D" id="3.40.50.720">
    <property type="entry name" value="NAD(P)-binding Rossmann-like Domain"/>
    <property type="match status" value="1"/>
</dbReference>
<dbReference type="HAMAP" id="MF_00183">
    <property type="entry name" value="DXP_reductoisom"/>
    <property type="match status" value="1"/>
</dbReference>
<dbReference type="InterPro" id="IPR003821">
    <property type="entry name" value="DXP_reductoisomerase"/>
</dbReference>
<dbReference type="InterPro" id="IPR013644">
    <property type="entry name" value="DXP_reductoisomerase_C"/>
</dbReference>
<dbReference type="InterPro" id="IPR013512">
    <property type="entry name" value="DXP_reductoisomerase_N"/>
</dbReference>
<dbReference type="InterPro" id="IPR026877">
    <property type="entry name" value="DXPR_C"/>
</dbReference>
<dbReference type="InterPro" id="IPR036169">
    <property type="entry name" value="DXPR_C_sf"/>
</dbReference>
<dbReference type="InterPro" id="IPR036291">
    <property type="entry name" value="NAD(P)-bd_dom_sf"/>
</dbReference>
<dbReference type="NCBIfam" id="TIGR00243">
    <property type="entry name" value="Dxr"/>
    <property type="match status" value="1"/>
</dbReference>
<dbReference type="NCBIfam" id="NF003938">
    <property type="entry name" value="PRK05447.1-1"/>
    <property type="match status" value="1"/>
</dbReference>
<dbReference type="NCBIfam" id="NF009114">
    <property type="entry name" value="PRK12464.1"/>
    <property type="match status" value="1"/>
</dbReference>
<dbReference type="PANTHER" id="PTHR30525">
    <property type="entry name" value="1-DEOXY-D-XYLULOSE 5-PHOSPHATE REDUCTOISOMERASE"/>
    <property type="match status" value="1"/>
</dbReference>
<dbReference type="PANTHER" id="PTHR30525:SF0">
    <property type="entry name" value="1-DEOXY-D-XYLULOSE 5-PHOSPHATE REDUCTOISOMERASE, CHLOROPLASTIC"/>
    <property type="match status" value="1"/>
</dbReference>
<dbReference type="Pfam" id="PF08436">
    <property type="entry name" value="DXP_redisom_C"/>
    <property type="match status" value="1"/>
</dbReference>
<dbReference type="Pfam" id="PF02670">
    <property type="entry name" value="DXP_reductoisom"/>
    <property type="match status" value="1"/>
</dbReference>
<dbReference type="Pfam" id="PF13288">
    <property type="entry name" value="DXPR_C"/>
    <property type="match status" value="1"/>
</dbReference>
<dbReference type="PIRSF" id="PIRSF006205">
    <property type="entry name" value="Dxp_reductismrs"/>
    <property type="match status" value="1"/>
</dbReference>
<dbReference type="SUPFAM" id="SSF69055">
    <property type="entry name" value="1-deoxy-D-xylulose-5-phosphate reductoisomerase, C-terminal domain"/>
    <property type="match status" value="1"/>
</dbReference>
<dbReference type="SUPFAM" id="SSF55347">
    <property type="entry name" value="Glyceraldehyde-3-phosphate dehydrogenase-like, C-terminal domain"/>
    <property type="match status" value="1"/>
</dbReference>
<dbReference type="SUPFAM" id="SSF51735">
    <property type="entry name" value="NAD(P)-binding Rossmann-fold domains"/>
    <property type="match status" value="1"/>
</dbReference>
<name>DXR_HAEDU</name>
<evidence type="ECO:0000255" key="1">
    <source>
        <dbReference type="HAMAP-Rule" id="MF_00183"/>
    </source>
</evidence>
<gene>
    <name evidence="1" type="primary">dxr</name>
    <name type="ordered locus">HD_1186</name>
</gene>
<proteinExistence type="inferred from homology"/>
<protein>
    <recommendedName>
        <fullName evidence="1">1-deoxy-D-xylulose 5-phosphate reductoisomerase</fullName>
        <shortName evidence="1">DXP reductoisomerase</shortName>
        <ecNumber evidence="1">1.1.1.267</ecNumber>
    </recommendedName>
    <alternativeName>
        <fullName evidence="1">1-deoxyxylulose-5-phosphate reductoisomerase</fullName>
    </alternativeName>
    <alternativeName>
        <fullName evidence="1">2-C-methyl-D-erythritol 4-phosphate synthase</fullName>
    </alternativeName>
</protein>
<feature type="chain" id="PRO_0000163659" description="1-deoxy-D-xylulose 5-phosphate reductoisomerase">
    <location>
        <begin position="1"/>
        <end position="396"/>
    </location>
</feature>
<feature type="binding site" evidence="1">
    <location>
        <position position="10"/>
    </location>
    <ligand>
        <name>NADPH</name>
        <dbReference type="ChEBI" id="CHEBI:57783"/>
    </ligand>
</feature>
<feature type="binding site" evidence="1">
    <location>
        <position position="11"/>
    </location>
    <ligand>
        <name>NADPH</name>
        <dbReference type="ChEBI" id="CHEBI:57783"/>
    </ligand>
</feature>
<feature type="binding site" evidence="1">
    <location>
        <position position="12"/>
    </location>
    <ligand>
        <name>NADPH</name>
        <dbReference type="ChEBI" id="CHEBI:57783"/>
    </ligand>
</feature>
<feature type="binding site" evidence="1">
    <location>
        <position position="13"/>
    </location>
    <ligand>
        <name>NADPH</name>
        <dbReference type="ChEBI" id="CHEBI:57783"/>
    </ligand>
</feature>
<feature type="binding site" evidence="1">
    <location>
        <position position="36"/>
    </location>
    <ligand>
        <name>NADPH</name>
        <dbReference type="ChEBI" id="CHEBI:57783"/>
    </ligand>
</feature>
<feature type="binding site" evidence="1">
    <location>
        <position position="37"/>
    </location>
    <ligand>
        <name>NADPH</name>
        <dbReference type="ChEBI" id="CHEBI:57783"/>
    </ligand>
</feature>
<feature type="binding site" evidence="1">
    <location>
        <position position="38"/>
    </location>
    <ligand>
        <name>NADPH</name>
        <dbReference type="ChEBI" id="CHEBI:57783"/>
    </ligand>
</feature>
<feature type="binding site" evidence="1">
    <location>
        <position position="124"/>
    </location>
    <ligand>
        <name>NADPH</name>
        <dbReference type="ChEBI" id="CHEBI:57783"/>
    </ligand>
</feature>
<feature type="binding site" evidence="1">
    <location>
        <position position="125"/>
    </location>
    <ligand>
        <name>1-deoxy-D-xylulose 5-phosphate</name>
        <dbReference type="ChEBI" id="CHEBI:57792"/>
    </ligand>
</feature>
<feature type="binding site" evidence="1">
    <location>
        <position position="126"/>
    </location>
    <ligand>
        <name>NADPH</name>
        <dbReference type="ChEBI" id="CHEBI:57783"/>
    </ligand>
</feature>
<feature type="binding site" evidence="1">
    <location>
        <position position="150"/>
    </location>
    <ligand>
        <name>Mn(2+)</name>
        <dbReference type="ChEBI" id="CHEBI:29035"/>
    </ligand>
</feature>
<feature type="binding site" evidence="1">
    <location>
        <position position="151"/>
    </location>
    <ligand>
        <name>1-deoxy-D-xylulose 5-phosphate</name>
        <dbReference type="ChEBI" id="CHEBI:57792"/>
    </ligand>
</feature>
<feature type="binding site" evidence="1">
    <location>
        <position position="152"/>
    </location>
    <ligand>
        <name>1-deoxy-D-xylulose 5-phosphate</name>
        <dbReference type="ChEBI" id="CHEBI:57792"/>
    </ligand>
</feature>
<feature type="binding site" evidence="1">
    <location>
        <position position="152"/>
    </location>
    <ligand>
        <name>Mn(2+)</name>
        <dbReference type="ChEBI" id="CHEBI:29035"/>
    </ligand>
</feature>
<feature type="binding site" evidence="1">
    <location>
        <position position="186"/>
    </location>
    <ligand>
        <name>1-deoxy-D-xylulose 5-phosphate</name>
        <dbReference type="ChEBI" id="CHEBI:57792"/>
    </ligand>
</feature>
<feature type="binding site" evidence="1">
    <location>
        <position position="209"/>
    </location>
    <ligand>
        <name>1-deoxy-D-xylulose 5-phosphate</name>
        <dbReference type="ChEBI" id="CHEBI:57792"/>
    </ligand>
</feature>
<feature type="binding site" evidence="1">
    <location>
        <position position="215"/>
    </location>
    <ligand>
        <name>NADPH</name>
        <dbReference type="ChEBI" id="CHEBI:57783"/>
    </ligand>
</feature>
<feature type="binding site" evidence="1">
    <location>
        <position position="222"/>
    </location>
    <ligand>
        <name>1-deoxy-D-xylulose 5-phosphate</name>
        <dbReference type="ChEBI" id="CHEBI:57792"/>
    </ligand>
</feature>
<feature type="binding site" evidence="1">
    <location>
        <position position="227"/>
    </location>
    <ligand>
        <name>1-deoxy-D-xylulose 5-phosphate</name>
        <dbReference type="ChEBI" id="CHEBI:57792"/>
    </ligand>
</feature>
<feature type="binding site" evidence="1">
    <location>
        <position position="228"/>
    </location>
    <ligand>
        <name>1-deoxy-D-xylulose 5-phosphate</name>
        <dbReference type="ChEBI" id="CHEBI:57792"/>
    </ligand>
</feature>
<feature type="binding site" evidence="1">
    <location>
        <position position="231"/>
    </location>
    <ligand>
        <name>1-deoxy-D-xylulose 5-phosphate</name>
        <dbReference type="ChEBI" id="CHEBI:57792"/>
    </ligand>
</feature>
<feature type="binding site" evidence="1">
    <location>
        <position position="231"/>
    </location>
    <ligand>
        <name>Mn(2+)</name>
        <dbReference type="ChEBI" id="CHEBI:29035"/>
    </ligand>
</feature>
<organism>
    <name type="scientific">Haemophilus ducreyi (strain 35000HP / ATCC 700724)</name>
    <dbReference type="NCBI Taxonomy" id="233412"/>
    <lineage>
        <taxon>Bacteria</taxon>
        <taxon>Pseudomonadati</taxon>
        <taxon>Pseudomonadota</taxon>
        <taxon>Gammaproteobacteria</taxon>
        <taxon>Pasteurellales</taxon>
        <taxon>Pasteurellaceae</taxon>
        <taxon>Haemophilus</taxon>
    </lineage>
</organism>
<keyword id="KW-0414">Isoprene biosynthesis</keyword>
<keyword id="KW-0464">Manganese</keyword>
<keyword id="KW-0479">Metal-binding</keyword>
<keyword id="KW-0521">NADP</keyword>
<keyword id="KW-0560">Oxidoreductase</keyword>
<keyword id="KW-1185">Reference proteome</keyword>
<reference key="1">
    <citation type="submission" date="2003-06" db="EMBL/GenBank/DDBJ databases">
        <title>The complete genome sequence of Haemophilus ducreyi.</title>
        <authorList>
            <person name="Munson R.S. Jr."/>
            <person name="Ray W.C."/>
            <person name="Mahairas G."/>
            <person name="Sabo P."/>
            <person name="Mungur R."/>
            <person name="Johnson L."/>
            <person name="Nguyen D."/>
            <person name="Wang J."/>
            <person name="Forst C."/>
            <person name="Hood L."/>
        </authorList>
    </citation>
    <scope>NUCLEOTIDE SEQUENCE [LARGE SCALE GENOMIC DNA]</scope>
    <source>
        <strain>35000HP / ATCC 700724</strain>
    </source>
</reference>
<sequence length="396" mass="42939">MKNIVILGATGSIGQSTLSVIEHNPDQYQVFALVGGKNVELMATQCSQFKPKFAALVDEKAAKLLAEQLKALNLTTQVLTGEQAICELAAHPDANIVMAAIVGAAGLLPTLAAVKAGKQILLANKESLVTCGQIFIDEARKSGATLLPVDSEHNAIFQSLPLVAQQKIGFCPLAELGVSRIILTGSGGPFREKSLAEFDSITPEQAIAHPNWSMGKKISVDSATMMNKGLEYIEARWLFNASVEEMEIIIHPQSIIHSMVRYIDGSVIAQMGNPDMRTPIAHTMAYPNRIPSGVMPLDFGKLTELTFIEPDFKRYPNLKLAIEASAEGQYATTALNAANEIAVDAFLNRQIRFTEIERINSTVVENIAPLRVNDVADVLHIDQLAREIAKQAMLNV</sequence>
<comment type="function">
    <text evidence="1">Catalyzes the NADPH-dependent rearrangement and reduction of 1-deoxy-D-xylulose-5-phosphate (DXP) to 2-C-methyl-D-erythritol 4-phosphate (MEP).</text>
</comment>
<comment type="catalytic activity">
    <reaction evidence="1">
        <text>2-C-methyl-D-erythritol 4-phosphate + NADP(+) = 1-deoxy-D-xylulose 5-phosphate + NADPH + H(+)</text>
        <dbReference type="Rhea" id="RHEA:13717"/>
        <dbReference type="ChEBI" id="CHEBI:15378"/>
        <dbReference type="ChEBI" id="CHEBI:57783"/>
        <dbReference type="ChEBI" id="CHEBI:57792"/>
        <dbReference type="ChEBI" id="CHEBI:58262"/>
        <dbReference type="ChEBI" id="CHEBI:58349"/>
        <dbReference type="EC" id="1.1.1.267"/>
    </reaction>
    <physiologicalReaction direction="right-to-left" evidence="1">
        <dbReference type="Rhea" id="RHEA:13719"/>
    </physiologicalReaction>
</comment>
<comment type="cofactor">
    <cofactor evidence="1">
        <name>Mg(2+)</name>
        <dbReference type="ChEBI" id="CHEBI:18420"/>
    </cofactor>
    <cofactor evidence="1">
        <name>Mn(2+)</name>
        <dbReference type="ChEBI" id="CHEBI:29035"/>
    </cofactor>
</comment>
<comment type="pathway">
    <text evidence="1">Isoprenoid biosynthesis; isopentenyl diphosphate biosynthesis via DXP pathway; isopentenyl diphosphate from 1-deoxy-D-xylulose 5-phosphate: step 1/6.</text>
</comment>
<comment type="similarity">
    <text evidence="1">Belongs to the DXR family.</text>
</comment>